<accession>Q82VW0</accession>
<evidence type="ECO:0000255" key="1">
    <source>
        <dbReference type="HAMAP-Rule" id="MF_00090"/>
    </source>
</evidence>
<comment type="function">
    <text evidence="1">Catalyzes the methyl esterification of L-isoaspartyl residues in peptides and proteins that result from spontaneous decomposition of normal L-aspartyl and L-asparaginyl residues. It plays a role in the repair and/or degradation of damaged proteins.</text>
</comment>
<comment type="catalytic activity">
    <reaction evidence="1">
        <text>[protein]-L-isoaspartate + S-adenosyl-L-methionine = [protein]-L-isoaspartate alpha-methyl ester + S-adenosyl-L-homocysteine</text>
        <dbReference type="Rhea" id="RHEA:12705"/>
        <dbReference type="Rhea" id="RHEA-COMP:12143"/>
        <dbReference type="Rhea" id="RHEA-COMP:12144"/>
        <dbReference type="ChEBI" id="CHEBI:57856"/>
        <dbReference type="ChEBI" id="CHEBI:59789"/>
        <dbReference type="ChEBI" id="CHEBI:90596"/>
        <dbReference type="ChEBI" id="CHEBI:90598"/>
        <dbReference type="EC" id="2.1.1.77"/>
    </reaction>
</comment>
<comment type="subcellular location">
    <subcellularLocation>
        <location evidence="1">Cytoplasm</location>
    </subcellularLocation>
</comment>
<comment type="similarity">
    <text evidence="1">Belongs to the methyltransferase superfamily. L-isoaspartyl/D-aspartyl protein methyltransferase family.</text>
</comment>
<gene>
    <name evidence="1" type="primary">pcm</name>
    <name type="ordered locus">NE0949</name>
</gene>
<proteinExistence type="inferred from homology"/>
<protein>
    <recommendedName>
        <fullName evidence="1">Protein-L-isoaspartate O-methyltransferase</fullName>
        <ecNumber evidence="1">2.1.1.77</ecNumber>
    </recommendedName>
    <alternativeName>
        <fullName evidence="1">L-isoaspartyl protein carboxyl methyltransferase</fullName>
    </alternativeName>
    <alternativeName>
        <fullName evidence="1">Protein L-isoaspartyl methyltransferase</fullName>
    </alternativeName>
    <alternativeName>
        <fullName evidence="1">Protein-beta-aspartate methyltransferase</fullName>
        <shortName evidence="1">PIMT</shortName>
    </alternativeName>
</protein>
<feature type="chain" id="PRO_0000351887" description="Protein-L-isoaspartate O-methyltransferase">
    <location>
        <begin position="1"/>
        <end position="222"/>
    </location>
</feature>
<feature type="active site" evidence="1">
    <location>
        <position position="69"/>
    </location>
</feature>
<dbReference type="EC" id="2.1.1.77" evidence="1"/>
<dbReference type="EMBL" id="AL954747">
    <property type="protein sequence ID" value="CAD84860.1"/>
    <property type="molecule type" value="Genomic_DNA"/>
</dbReference>
<dbReference type="RefSeq" id="WP_011111558.1">
    <property type="nucleotide sequence ID" value="NC_004757.1"/>
</dbReference>
<dbReference type="SMR" id="Q82VW0"/>
<dbReference type="STRING" id="228410.NE0949"/>
<dbReference type="GeneID" id="87104141"/>
<dbReference type="KEGG" id="neu:NE0949"/>
<dbReference type="eggNOG" id="COG2518">
    <property type="taxonomic scope" value="Bacteria"/>
</dbReference>
<dbReference type="HOGENOM" id="CLU_055432_2_0_4"/>
<dbReference type="OrthoDB" id="9810066at2"/>
<dbReference type="PhylomeDB" id="Q82VW0"/>
<dbReference type="Proteomes" id="UP000001416">
    <property type="component" value="Chromosome"/>
</dbReference>
<dbReference type="GO" id="GO:0005737">
    <property type="term" value="C:cytoplasm"/>
    <property type="evidence" value="ECO:0007669"/>
    <property type="project" value="UniProtKB-SubCell"/>
</dbReference>
<dbReference type="GO" id="GO:0004719">
    <property type="term" value="F:protein-L-isoaspartate (D-aspartate) O-methyltransferase activity"/>
    <property type="evidence" value="ECO:0007669"/>
    <property type="project" value="UniProtKB-UniRule"/>
</dbReference>
<dbReference type="GO" id="GO:0032259">
    <property type="term" value="P:methylation"/>
    <property type="evidence" value="ECO:0007669"/>
    <property type="project" value="UniProtKB-KW"/>
</dbReference>
<dbReference type="GO" id="GO:0036211">
    <property type="term" value="P:protein modification process"/>
    <property type="evidence" value="ECO:0007669"/>
    <property type="project" value="UniProtKB-UniRule"/>
</dbReference>
<dbReference type="GO" id="GO:0030091">
    <property type="term" value="P:protein repair"/>
    <property type="evidence" value="ECO:0007669"/>
    <property type="project" value="UniProtKB-UniRule"/>
</dbReference>
<dbReference type="CDD" id="cd02440">
    <property type="entry name" value="AdoMet_MTases"/>
    <property type="match status" value="1"/>
</dbReference>
<dbReference type="FunFam" id="3.40.50.150:FF:000010">
    <property type="entry name" value="Protein-L-isoaspartate O-methyltransferase"/>
    <property type="match status" value="1"/>
</dbReference>
<dbReference type="Gene3D" id="3.40.50.150">
    <property type="entry name" value="Vaccinia Virus protein VP39"/>
    <property type="match status" value="1"/>
</dbReference>
<dbReference type="HAMAP" id="MF_00090">
    <property type="entry name" value="PIMT"/>
    <property type="match status" value="1"/>
</dbReference>
<dbReference type="InterPro" id="IPR000682">
    <property type="entry name" value="PCMT"/>
</dbReference>
<dbReference type="InterPro" id="IPR029063">
    <property type="entry name" value="SAM-dependent_MTases_sf"/>
</dbReference>
<dbReference type="NCBIfam" id="TIGR00080">
    <property type="entry name" value="pimt"/>
    <property type="match status" value="1"/>
</dbReference>
<dbReference type="NCBIfam" id="NF001453">
    <property type="entry name" value="PRK00312.1"/>
    <property type="match status" value="1"/>
</dbReference>
<dbReference type="PANTHER" id="PTHR11579">
    <property type="entry name" value="PROTEIN-L-ISOASPARTATE O-METHYLTRANSFERASE"/>
    <property type="match status" value="1"/>
</dbReference>
<dbReference type="PANTHER" id="PTHR11579:SF0">
    <property type="entry name" value="PROTEIN-L-ISOASPARTATE(D-ASPARTATE) O-METHYLTRANSFERASE"/>
    <property type="match status" value="1"/>
</dbReference>
<dbReference type="Pfam" id="PF01135">
    <property type="entry name" value="PCMT"/>
    <property type="match status" value="1"/>
</dbReference>
<dbReference type="SUPFAM" id="SSF53335">
    <property type="entry name" value="S-adenosyl-L-methionine-dependent methyltransferases"/>
    <property type="match status" value="1"/>
</dbReference>
<dbReference type="PROSITE" id="PS01279">
    <property type="entry name" value="PCMT"/>
    <property type="match status" value="1"/>
</dbReference>
<name>PIMT_NITEU</name>
<reference key="1">
    <citation type="journal article" date="2003" name="J. Bacteriol.">
        <title>Complete genome sequence of the ammonia-oxidizing bacterium and obligate chemolithoautotroph Nitrosomonas europaea.</title>
        <authorList>
            <person name="Chain P."/>
            <person name="Lamerdin J.E."/>
            <person name="Larimer F.W."/>
            <person name="Regala W."/>
            <person name="Lao V."/>
            <person name="Land M.L."/>
            <person name="Hauser L."/>
            <person name="Hooper A.B."/>
            <person name="Klotz M.G."/>
            <person name="Norton J."/>
            <person name="Sayavedra-Soto L.A."/>
            <person name="Arciero D.M."/>
            <person name="Hommes N.G."/>
            <person name="Whittaker M.M."/>
            <person name="Arp D.J."/>
        </authorList>
    </citation>
    <scope>NUCLEOTIDE SEQUENCE [LARGE SCALE GENOMIC DNA]</scope>
    <source>
        <strain>ATCC 19718 / CIP 103999 / KCTC 2705 / NBRC 14298</strain>
    </source>
</reference>
<keyword id="KW-0963">Cytoplasm</keyword>
<keyword id="KW-0489">Methyltransferase</keyword>
<keyword id="KW-1185">Reference proteome</keyword>
<keyword id="KW-0949">S-adenosyl-L-methionine</keyword>
<keyword id="KW-0808">Transferase</keyword>
<sequence>MSVRHSGIGMTSLRTRVRMVERLREQGIKDEVVLAAMGFIPRHLFVEAALASRAYEDVALPINYGQTISSPWIVGRMTELLRNGGSNSLRKILEIGTGCGYQTAVLAKIASEVYSIERIGPLLTRTRIRLRELGILNIHLKHADGMRGLPEAGLFDGIMMTAVIPEIPETLLEQLAMGGRMVFPKGNRKQYLCVIDHTTEGFVETILDEVMFVPILPGTINR</sequence>
<organism>
    <name type="scientific">Nitrosomonas europaea (strain ATCC 19718 / CIP 103999 / KCTC 2705 / NBRC 14298)</name>
    <dbReference type="NCBI Taxonomy" id="228410"/>
    <lineage>
        <taxon>Bacteria</taxon>
        <taxon>Pseudomonadati</taxon>
        <taxon>Pseudomonadota</taxon>
        <taxon>Betaproteobacteria</taxon>
        <taxon>Nitrosomonadales</taxon>
        <taxon>Nitrosomonadaceae</taxon>
        <taxon>Nitrosomonas</taxon>
    </lineage>
</organism>